<evidence type="ECO:0000255" key="1">
    <source>
        <dbReference type="HAMAP-Rule" id="MF_01017"/>
    </source>
</evidence>
<keyword id="KW-0285">Flavoprotein</keyword>
<keyword id="KW-0288">FMN</keyword>
<keyword id="KW-0520">NAD</keyword>
<keyword id="KW-0521">NADP</keyword>
<keyword id="KW-0547">Nucleotide-binding</keyword>
<keyword id="KW-0560">Oxidoreductase</keyword>
<comment type="catalytic activity">
    <reaction evidence="1">
        <text>a quinone + NADH + H(+) = a quinol + NAD(+)</text>
        <dbReference type="Rhea" id="RHEA:46160"/>
        <dbReference type="ChEBI" id="CHEBI:15378"/>
        <dbReference type="ChEBI" id="CHEBI:24646"/>
        <dbReference type="ChEBI" id="CHEBI:57540"/>
        <dbReference type="ChEBI" id="CHEBI:57945"/>
        <dbReference type="ChEBI" id="CHEBI:132124"/>
        <dbReference type="EC" id="1.6.5.2"/>
    </reaction>
</comment>
<comment type="catalytic activity">
    <reaction evidence="1">
        <text>a quinone + NADPH + H(+) = a quinol + NADP(+)</text>
        <dbReference type="Rhea" id="RHEA:46164"/>
        <dbReference type="ChEBI" id="CHEBI:15378"/>
        <dbReference type="ChEBI" id="CHEBI:24646"/>
        <dbReference type="ChEBI" id="CHEBI:57783"/>
        <dbReference type="ChEBI" id="CHEBI:58349"/>
        <dbReference type="ChEBI" id="CHEBI:132124"/>
        <dbReference type="EC" id="1.6.5.2"/>
    </reaction>
</comment>
<comment type="cofactor">
    <cofactor evidence="1">
        <name>FMN</name>
        <dbReference type="ChEBI" id="CHEBI:58210"/>
    </cofactor>
    <text evidence="1">Binds 1 FMN per monomer.</text>
</comment>
<comment type="similarity">
    <text evidence="1">Belongs to the WrbA family.</text>
</comment>
<reference key="1">
    <citation type="submission" date="2008-02" db="EMBL/GenBank/DDBJ databases">
        <title>Complete sequence of Escherichia coli C str. ATCC 8739.</title>
        <authorList>
            <person name="Copeland A."/>
            <person name="Lucas S."/>
            <person name="Lapidus A."/>
            <person name="Glavina del Rio T."/>
            <person name="Dalin E."/>
            <person name="Tice H."/>
            <person name="Bruce D."/>
            <person name="Goodwin L."/>
            <person name="Pitluck S."/>
            <person name="Kiss H."/>
            <person name="Brettin T."/>
            <person name="Detter J.C."/>
            <person name="Han C."/>
            <person name="Kuske C.R."/>
            <person name="Schmutz J."/>
            <person name="Larimer F."/>
            <person name="Land M."/>
            <person name="Hauser L."/>
            <person name="Kyrpides N."/>
            <person name="Mikhailova N."/>
            <person name="Ingram L."/>
            <person name="Richardson P."/>
        </authorList>
    </citation>
    <scope>NUCLEOTIDE SEQUENCE [LARGE SCALE GENOMIC DNA]</scope>
    <source>
        <strain>ATCC 8739 / DSM 1576 / NBRC 3972 / NCIMB 8545 / WDCM 00012 / Crooks</strain>
    </source>
</reference>
<feature type="chain" id="PRO_1000084138" description="NAD(P)H dehydrogenase (quinone)">
    <location>
        <begin position="1"/>
        <end position="198"/>
    </location>
</feature>
<feature type="domain" description="Flavodoxin-like" evidence="1">
    <location>
        <begin position="4"/>
        <end position="189"/>
    </location>
</feature>
<feature type="binding site" evidence="1">
    <location>
        <begin position="10"/>
        <end position="15"/>
    </location>
    <ligand>
        <name>FMN</name>
        <dbReference type="ChEBI" id="CHEBI:58210"/>
    </ligand>
</feature>
<feature type="binding site" evidence="1">
    <location>
        <position position="12"/>
    </location>
    <ligand>
        <name>NAD(+)</name>
        <dbReference type="ChEBI" id="CHEBI:57540"/>
    </ligand>
</feature>
<feature type="binding site" evidence="1">
    <location>
        <begin position="78"/>
        <end position="80"/>
    </location>
    <ligand>
        <name>FMN</name>
        <dbReference type="ChEBI" id="CHEBI:58210"/>
    </ligand>
</feature>
<feature type="binding site" evidence="1">
    <location>
        <position position="98"/>
    </location>
    <ligand>
        <name>substrate</name>
    </ligand>
</feature>
<feature type="binding site" evidence="1">
    <location>
        <begin position="113"/>
        <end position="118"/>
    </location>
    <ligand>
        <name>FMN</name>
        <dbReference type="ChEBI" id="CHEBI:58210"/>
    </ligand>
</feature>
<feature type="binding site" evidence="1">
    <location>
        <position position="133"/>
    </location>
    <ligand>
        <name>FMN</name>
        <dbReference type="ChEBI" id="CHEBI:58210"/>
    </ligand>
</feature>
<sequence>MAKVLVLYYSMYGHIETMARAVAEGASKVDGAEVVVKRVPETMPPQLFEKAGGKTQTAPVATPQELADYDAIIFGTPTRFGNMSGQMRTFLDQTGGLWASGALYGKLASVFSSTGTGGGQEQTITSTWTTLAHHGMVIVPIGYAAQELFDVSQVRGGTPYGATTIAGGDGSRQPSQEELSIARYQGEYVAGLAVKLNG</sequence>
<dbReference type="EC" id="1.6.5.2" evidence="1"/>
<dbReference type="EMBL" id="CP000946">
    <property type="protein sequence ID" value="ACA78222.1"/>
    <property type="molecule type" value="Genomic_DNA"/>
</dbReference>
<dbReference type="SMR" id="B1IV93"/>
<dbReference type="KEGG" id="ecl:EcolC_2591"/>
<dbReference type="HOGENOM" id="CLU_051402_0_2_6"/>
<dbReference type="GO" id="GO:0016020">
    <property type="term" value="C:membrane"/>
    <property type="evidence" value="ECO:0007669"/>
    <property type="project" value="TreeGrafter"/>
</dbReference>
<dbReference type="GO" id="GO:0050660">
    <property type="term" value="F:flavin adenine dinucleotide binding"/>
    <property type="evidence" value="ECO:0007669"/>
    <property type="project" value="UniProtKB-UniRule"/>
</dbReference>
<dbReference type="GO" id="GO:0010181">
    <property type="term" value="F:FMN binding"/>
    <property type="evidence" value="ECO:0007669"/>
    <property type="project" value="InterPro"/>
</dbReference>
<dbReference type="GO" id="GO:0051287">
    <property type="term" value="F:NAD binding"/>
    <property type="evidence" value="ECO:0007669"/>
    <property type="project" value="UniProtKB-UniRule"/>
</dbReference>
<dbReference type="GO" id="GO:0050136">
    <property type="term" value="F:NADH:ubiquinone reductase (non-electrogenic) activity"/>
    <property type="evidence" value="ECO:0007669"/>
    <property type="project" value="RHEA"/>
</dbReference>
<dbReference type="GO" id="GO:0050661">
    <property type="term" value="F:NADP binding"/>
    <property type="evidence" value="ECO:0007669"/>
    <property type="project" value="UniProtKB-UniRule"/>
</dbReference>
<dbReference type="GO" id="GO:0008753">
    <property type="term" value="F:NADPH dehydrogenase (quinone) activity"/>
    <property type="evidence" value="ECO:0007669"/>
    <property type="project" value="RHEA"/>
</dbReference>
<dbReference type="FunFam" id="3.40.50.360:FF:000004">
    <property type="entry name" value="NAD(P)H dehydrogenase (quinone)"/>
    <property type="match status" value="1"/>
</dbReference>
<dbReference type="Gene3D" id="3.40.50.360">
    <property type="match status" value="1"/>
</dbReference>
<dbReference type="HAMAP" id="MF_01017">
    <property type="entry name" value="NQOR"/>
    <property type="match status" value="1"/>
</dbReference>
<dbReference type="InterPro" id="IPR008254">
    <property type="entry name" value="Flavodoxin/NO_synth"/>
</dbReference>
<dbReference type="InterPro" id="IPR029039">
    <property type="entry name" value="Flavoprotein-like_sf"/>
</dbReference>
<dbReference type="InterPro" id="IPR010089">
    <property type="entry name" value="Flavoprotein_WrbA-like"/>
</dbReference>
<dbReference type="InterPro" id="IPR005025">
    <property type="entry name" value="FMN_Rdtase-like_dom"/>
</dbReference>
<dbReference type="InterPro" id="IPR037513">
    <property type="entry name" value="NQO"/>
</dbReference>
<dbReference type="NCBIfam" id="TIGR01755">
    <property type="entry name" value="flav_wrbA"/>
    <property type="match status" value="1"/>
</dbReference>
<dbReference type="NCBIfam" id="NF002999">
    <property type="entry name" value="PRK03767.1"/>
    <property type="match status" value="1"/>
</dbReference>
<dbReference type="PANTHER" id="PTHR30546">
    <property type="entry name" value="FLAVODOXIN-RELATED PROTEIN WRBA-RELATED"/>
    <property type="match status" value="1"/>
</dbReference>
<dbReference type="PANTHER" id="PTHR30546:SF23">
    <property type="entry name" value="FLAVOPROTEIN-LIKE PROTEIN YCP4-RELATED"/>
    <property type="match status" value="1"/>
</dbReference>
<dbReference type="Pfam" id="PF03358">
    <property type="entry name" value="FMN_red"/>
    <property type="match status" value="1"/>
</dbReference>
<dbReference type="SUPFAM" id="SSF52218">
    <property type="entry name" value="Flavoproteins"/>
    <property type="match status" value="1"/>
</dbReference>
<dbReference type="PROSITE" id="PS50902">
    <property type="entry name" value="FLAVODOXIN_LIKE"/>
    <property type="match status" value="1"/>
</dbReference>
<accession>B1IV93</accession>
<organism>
    <name type="scientific">Escherichia coli (strain ATCC 8739 / DSM 1576 / NBRC 3972 / NCIMB 8545 / WDCM 00012 / Crooks)</name>
    <dbReference type="NCBI Taxonomy" id="481805"/>
    <lineage>
        <taxon>Bacteria</taxon>
        <taxon>Pseudomonadati</taxon>
        <taxon>Pseudomonadota</taxon>
        <taxon>Gammaproteobacteria</taxon>
        <taxon>Enterobacterales</taxon>
        <taxon>Enterobacteriaceae</taxon>
        <taxon>Escherichia</taxon>
    </lineage>
</organism>
<gene>
    <name type="ordered locus">EcolC_2591</name>
</gene>
<name>NQOR_ECOLC</name>
<proteinExistence type="inferred from homology"/>
<protein>
    <recommendedName>
        <fullName evidence="1">NAD(P)H dehydrogenase (quinone)</fullName>
        <ecNumber evidence="1">1.6.5.2</ecNumber>
    </recommendedName>
    <alternativeName>
        <fullName>Flavoprotein WrbA</fullName>
    </alternativeName>
    <alternativeName>
        <fullName evidence="1">NAD(P)H:quinone oxidoreductase</fullName>
        <shortName evidence="1">NQO</shortName>
    </alternativeName>
</protein>